<feature type="chain" id="PRO_1000020025" description="Methionyl-tRNA formyltransferase">
    <location>
        <begin position="1"/>
        <end position="315"/>
    </location>
</feature>
<feature type="binding site" evidence="1">
    <location>
        <begin position="107"/>
        <end position="110"/>
    </location>
    <ligand>
        <name>(6S)-5,6,7,8-tetrahydrofolate</name>
        <dbReference type="ChEBI" id="CHEBI:57453"/>
    </ligand>
</feature>
<reference key="1">
    <citation type="journal article" date="2006" name="BMC Genomics">
        <title>Comparative genome analysis: selection pressure on the Borrelia vls cassettes is essential for infectivity.</title>
        <authorList>
            <person name="Gloeckner G."/>
            <person name="Schulte-Spechtel U."/>
            <person name="Schilhabel M."/>
            <person name="Felder M."/>
            <person name="Suehnel J."/>
            <person name="Wilske B."/>
            <person name="Platzer M."/>
        </authorList>
    </citation>
    <scope>NUCLEOTIDE SEQUENCE [LARGE SCALE GENOMIC DNA]</scope>
    <source>
        <strain>PKo</strain>
    </source>
</reference>
<reference key="2">
    <citation type="journal article" date="2011" name="J. Bacteriol.">
        <title>Whole-genome sequences of two Borrelia afzelii and two Borrelia garinii Lyme disease agent isolates.</title>
        <authorList>
            <person name="Casjens S.R."/>
            <person name="Mongodin E.F."/>
            <person name="Qiu W.G."/>
            <person name="Dunn J.J."/>
            <person name="Luft B.J."/>
            <person name="Fraser-Liggett C.M."/>
            <person name="Schutzer S.E."/>
        </authorList>
    </citation>
    <scope>NUCLEOTIDE SEQUENCE [LARGE SCALE GENOMIC DNA]</scope>
    <source>
        <strain>PKo</strain>
    </source>
</reference>
<keyword id="KW-0648">Protein biosynthesis</keyword>
<keyword id="KW-0808">Transferase</keyword>
<proteinExistence type="inferred from homology"/>
<protein>
    <recommendedName>
        <fullName evidence="1">Methionyl-tRNA formyltransferase</fullName>
        <ecNumber evidence="1">2.1.2.9</ecNumber>
    </recommendedName>
</protein>
<gene>
    <name evidence="1" type="primary">fmt</name>
    <name type="ordered locus">BAPKO_0064</name>
    <name type="ordered locus">BafPKo_0063</name>
</gene>
<name>FMT_BORAP</name>
<comment type="function">
    <text evidence="1">Attaches a formyl group to the free amino group of methionyl-tRNA(fMet). The formyl group appears to play a dual role in the initiator identity of N-formylmethionyl-tRNA by promoting its recognition by IF2 and preventing the misappropriation of this tRNA by the elongation apparatus.</text>
</comment>
<comment type="catalytic activity">
    <reaction evidence="1">
        <text>L-methionyl-tRNA(fMet) + (6R)-10-formyltetrahydrofolate = N-formyl-L-methionyl-tRNA(fMet) + (6S)-5,6,7,8-tetrahydrofolate + H(+)</text>
        <dbReference type="Rhea" id="RHEA:24380"/>
        <dbReference type="Rhea" id="RHEA-COMP:9952"/>
        <dbReference type="Rhea" id="RHEA-COMP:9953"/>
        <dbReference type="ChEBI" id="CHEBI:15378"/>
        <dbReference type="ChEBI" id="CHEBI:57453"/>
        <dbReference type="ChEBI" id="CHEBI:78530"/>
        <dbReference type="ChEBI" id="CHEBI:78844"/>
        <dbReference type="ChEBI" id="CHEBI:195366"/>
        <dbReference type="EC" id="2.1.2.9"/>
    </reaction>
</comment>
<comment type="similarity">
    <text evidence="1">Belongs to the Fmt family.</text>
</comment>
<dbReference type="EC" id="2.1.2.9" evidence="1"/>
<dbReference type="EMBL" id="CP000395">
    <property type="protein sequence ID" value="ABH01327.1"/>
    <property type="molecule type" value="Genomic_DNA"/>
</dbReference>
<dbReference type="EMBL" id="CP002933">
    <property type="protein sequence ID" value="AEL69296.1"/>
    <property type="molecule type" value="Genomic_DNA"/>
</dbReference>
<dbReference type="RefSeq" id="WP_011600809.1">
    <property type="nucleotide sequence ID" value="NZ_CP160066.1"/>
</dbReference>
<dbReference type="SMR" id="Q0SPA1"/>
<dbReference type="STRING" id="29518.BLA32_03965"/>
<dbReference type="GeneID" id="76831604"/>
<dbReference type="KEGG" id="baf:BAPKO_0064"/>
<dbReference type="KEGG" id="bafz:BafPKo_0063"/>
<dbReference type="PATRIC" id="fig|390236.22.peg.62"/>
<dbReference type="eggNOG" id="COG0223">
    <property type="taxonomic scope" value="Bacteria"/>
</dbReference>
<dbReference type="HOGENOM" id="CLU_033347_1_1_12"/>
<dbReference type="OrthoDB" id="9802815at2"/>
<dbReference type="Proteomes" id="UP000005216">
    <property type="component" value="Chromosome"/>
</dbReference>
<dbReference type="GO" id="GO:0005829">
    <property type="term" value="C:cytosol"/>
    <property type="evidence" value="ECO:0007669"/>
    <property type="project" value="TreeGrafter"/>
</dbReference>
<dbReference type="GO" id="GO:0004479">
    <property type="term" value="F:methionyl-tRNA formyltransferase activity"/>
    <property type="evidence" value="ECO:0007669"/>
    <property type="project" value="UniProtKB-UniRule"/>
</dbReference>
<dbReference type="CDD" id="cd08646">
    <property type="entry name" value="FMT_core_Met-tRNA-FMT_N"/>
    <property type="match status" value="1"/>
</dbReference>
<dbReference type="CDD" id="cd08704">
    <property type="entry name" value="Met_tRNA_FMT_C"/>
    <property type="match status" value="1"/>
</dbReference>
<dbReference type="Gene3D" id="3.10.25.10">
    <property type="entry name" value="Formyl transferase, C-terminal domain"/>
    <property type="match status" value="1"/>
</dbReference>
<dbReference type="Gene3D" id="3.40.50.170">
    <property type="entry name" value="Formyl transferase, N-terminal domain"/>
    <property type="match status" value="1"/>
</dbReference>
<dbReference type="HAMAP" id="MF_00182">
    <property type="entry name" value="Formyl_trans"/>
    <property type="match status" value="1"/>
</dbReference>
<dbReference type="InterPro" id="IPR005794">
    <property type="entry name" value="Fmt"/>
</dbReference>
<dbReference type="InterPro" id="IPR005793">
    <property type="entry name" value="Formyl_trans_C"/>
</dbReference>
<dbReference type="InterPro" id="IPR037022">
    <property type="entry name" value="Formyl_trans_C_sf"/>
</dbReference>
<dbReference type="InterPro" id="IPR002376">
    <property type="entry name" value="Formyl_transf_N"/>
</dbReference>
<dbReference type="InterPro" id="IPR036477">
    <property type="entry name" value="Formyl_transf_N_sf"/>
</dbReference>
<dbReference type="InterPro" id="IPR011034">
    <property type="entry name" value="Formyl_transferase-like_C_sf"/>
</dbReference>
<dbReference type="InterPro" id="IPR044135">
    <property type="entry name" value="Met-tRNA-FMT_C"/>
</dbReference>
<dbReference type="InterPro" id="IPR041711">
    <property type="entry name" value="Met-tRNA-FMT_N"/>
</dbReference>
<dbReference type="NCBIfam" id="TIGR00460">
    <property type="entry name" value="fmt"/>
    <property type="match status" value="1"/>
</dbReference>
<dbReference type="PANTHER" id="PTHR11138">
    <property type="entry name" value="METHIONYL-TRNA FORMYLTRANSFERASE"/>
    <property type="match status" value="1"/>
</dbReference>
<dbReference type="PANTHER" id="PTHR11138:SF5">
    <property type="entry name" value="METHIONYL-TRNA FORMYLTRANSFERASE, MITOCHONDRIAL"/>
    <property type="match status" value="1"/>
</dbReference>
<dbReference type="Pfam" id="PF02911">
    <property type="entry name" value="Formyl_trans_C"/>
    <property type="match status" value="1"/>
</dbReference>
<dbReference type="Pfam" id="PF00551">
    <property type="entry name" value="Formyl_trans_N"/>
    <property type="match status" value="1"/>
</dbReference>
<dbReference type="SUPFAM" id="SSF50486">
    <property type="entry name" value="FMT C-terminal domain-like"/>
    <property type="match status" value="1"/>
</dbReference>
<dbReference type="SUPFAM" id="SSF53328">
    <property type="entry name" value="Formyltransferase"/>
    <property type="match status" value="1"/>
</dbReference>
<accession>Q0SPA1</accession>
<accession>G0IQR0</accession>
<sequence>MKIFFVSSSSIALEVFKEIVKHYEVVGVLTLPDKPKGRGQKLSQNVIKLEAIAKNIKVFDPLILDDNILNLIRDLNPDLMLVFSYGKIFKKEFLDIFPKGCINVHPSLLPKYRGVSPIQSAILNGDCVSGITIQNMALKMDSGNILVQKNFKIKSCDTSYDISKLVSSLSPNLVLEALEKIGKGFLGIPQKSSEATFCSFFKKESGFVDFNLSAFEIKNRINACNPWPLARARLDYGDIIFHRADFLKIDLYKEKKVGEIVDFDSEKGLFVNTGEGILLLLEVQRPGRRVLDYKSFYNGSRQLIGQVFSSIGGVY</sequence>
<organism>
    <name type="scientific">Borreliella afzelii (strain PKo)</name>
    <name type="common">Borrelia afzelii</name>
    <dbReference type="NCBI Taxonomy" id="390236"/>
    <lineage>
        <taxon>Bacteria</taxon>
        <taxon>Pseudomonadati</taxon>
        <taxon>Spirochaetota</taxon>
        <taxon>Spirochaetia</taxon>
        <taxon>Spirochaetales</taxon>
        <taxon>Borreliaceae</taxon>
        <taxon>Borreliella</taxon>
    </lineage>
</organism>
<evidence type="ECO:0000255" key="1">
    <source>
        <dbReference type="HAMAP-Rule" id="MF_00182"/>
    </source>
</evidence>